<protein>
    <recommendedName>
        <fullName evidence="1">Transcription elongation factor GreA</fullName>
    </recommendedName>
    <alternativeName>
        <fullName evidence="1">Transcript cleavage factor GreA</fullName>
    </alternativeName>
</protein>
<sequence>MSEAKKYVMTYEGVKKLEEELEYLKTVKRKEITEKIKVALSFGDLSENSEYDEAKNEQAFVEGRIIQLENMLKNASIVDENEVPKDIVSVGSIVKVKDYEFDEEVEYIIVGSAEADPMNNKISNESPVGHGLIGKKVGDIIEVTVPDGVSKYEILEVNRA</sequence>
<comment type="function">
    <text evidence="1">Necessary for efficient RNA polymerase transcription elongation past template-encoded arresting sites. The arresting sites in DNA have the property of trapping a certain fraction of elongating RNA polymerases that pass through, resulting in locked ternary complexes. Cleavage of the nascent transcript by cleavage factors such as GreA or GreB allows the resumption of elongation from the new 3'terminus. GreA releases sequences of 2 to 3 nucleotides.</text>
</comment>
<comment type="similarity">
    <text evidence="1">Belongs to the GreA/GreB family.</text>
</comment>
<dbReference type="EMBL" id="CP000728">
    <property type="protein sequence ID" value="ABS40182.1"/>
    <property type="molecule type" value="Genomic_DNA"/>
</dbReference>
<dbReference type="RefSeq" id="WP_003361709.1">
    <property type="nucleotide sequence ID" value="NC_009699.1"/>
</dbReference>
<dbReference type="SMR" id="A7GJB4"/>
<dbReference type="KEGG" id="cbf:CLI_3728"/>
<dbReference type="HOGENOM" id="CLU_101379_2_1_9"/>
<dbReference type="Proteomes" id="UP000002410">
    <property type="component" value="Chromosome"/>
</dbReference>
<dbReference type="GO" id="GO:0003677">
    <property type="term" value="F:DNA binding"/>
    <property type="evidence" value="ECO:0007669"/>
    <property type="project" value="UniProtKB-UniRule"/>
</dbReference>
<dbReference type="GO" id="GO:0070063">
    <property type="term" value="F:RNA polymerase binding"/>
    <property type="evidence" value="ECO:0007669"/>
    <property type="project" value="InterPro"/>
</dbReference>
<dbReference type="GO" id="GO:0006354">
    <property type="term" value="P:DNA-templated transcription elongation"/>
    <property type="evidence" value="ECO:0007669"/>
    <property type="project" value="TreeGrafter"/>
</dbReference>
<dbReference type="GO" id="GO:0032784">
    <property type="term" value="P:regulation of DNA-templated transcription elongation"/>
    <property type="evidence" value="ECO:0007669"/>
    <property type="project" value="UniProtKB-UniRule"/>
</dbReference>
<dbReference type="FunFam" id="1.10.287.180:FF:000001">
    <property type="entry name" value="Transcription elongation factor GreA"/>
    <property type="match status" value="1"/>
</dbReference>
<dbReference type="FunFam" id="3.10.50.30:FF:000001">
    <property type="entry name" value="Transcription elongation factor GreA"/>
    <property type="match status" value="1"/>
</dbReference>
<dbReference type="Gene3D" id="3.10.50.30">
    <property type="entry name" value="Transcription elongation factor, GreA/GreB, C-terminal domain"/>
    <property type="match status" value="1"/>
</dbReference>
<dbReference type="Gene3D" id="1.10.287.180">
    <property type="entry name" value="Transcription elongation factor, GreA/GreB, N-terminal domain"/>
    <property type="match status" value="1"/>
</dbReference>
<dbReference type="HAMAP" id="MF_00105">
    <property type="entry name" value="GreA_GreB"/>
    <property type="match status" value="1"/>
</dbReference>
<dbReference type="InterPro" id="IPR036953">
    <property type="entry name" value="GreA/GreB_C_sf"/>
</dbReference>
<dbReference type="InterPro" id="IPR018151">
    <property type="entry name" value="TF_GreA/GreB_CS"/>
</dbReference>
<dbReference type="InterPro" id="IPR006359">
    <property type="entry name" value="Tscrpt_elong_fac_GreA"/>
</dbReference>
<dbReference type="InterPro" id="IPR028624">
    <property type="entry name" value="Tscrpt_elong_fac_GreA/B"/>
</dbReference>
<dbReference type="InterPro" id="IPR001437">
    <property type="entry name" value="Tscrpt_elong_fac_GreA/B_C"/>
</dbReference>
<dbReference type="InterPro" id="IPR023459">
    <property type="entry name" value="Tscrpt_elong_fac_GreA/B_fam"/>
</dbReference>
<dbReference type="InterPro" id="IPR022691">
    <property type="entry name" value="Tscrpt_elong_fac_GreA/B_N"/>
</dbReference>
<dbReference type="InterPro" id="IPR036805">
    <property type="entry name" value="Tscrpt_elong_fac_GreA/B_N_sf"/>
</dbReference>
<dbReference type="NCBIfam" id="TIGR01462">
    <property type="entry name" value="greA"/>
    <property type="match status" value="1"/>
</dbReference>
<dbReference type="NCBIfam" id="NF001261">
    <property type="entry name" value="PRK00226.1-2"/>
    <property type="match status" value="1"/>
</dbReference>
<dbReference type="NCBIfam" id="NF001263">
    <property type="entry name" value="PRK00226.1-4"/>
    <property type="match status" value="1"/>
</dbReference>
<dbReference type="PANTHER" id="PTHR30437">
    <property type="entry name" value="TRANSCRIPTION ELONGATION FACTOR GREA"/>
    <property type="match status" value="1"/>
</dbReference>
<dbReference type="PANTHER" id="PTHR30437:SF4">
    <property type="entry name" value="TRANSCRIPTION ELONGATION FACTOR GREA"/>
    <property type="match status" value="1"/>
</dbReference>
<dbReference type="Pfam" id="PF01272">
    <property type="entry name" value="GreA_GreB"/>
    <property type="match status" value="1"/>
</dbReference>
<dbReference type="Pfam" id="PF03449">
    <property type="entry name" value="GreA_GreB_N"/>
    <property type="match status" value="1"/>
</dbReference>
<dbReference type="PIRSF" id="PIRSF006092">
    <property type="entry name" value="GreA_GreB"/>
    <property type="match status" value="1"/>
</dbReference>
<dbReference type="SUPFAM" id="SSF54534">
    <property type="entry name" value="FKBP-like"/>
    <property type="match status" value="1"/>
</dbReference>
<dbReference type="SUPFAM" id="SSF46557">
    <property type="entry name" value="GreA transcript cleavage protein, N-terminal domain"/>
    <property type="match status" value="1"/>
</dbReference>
<dbReference type="PROSITE" id="PS00829">
    <property type="entry name" value="GREAB_1"/>
    <property type="match status" value="1"/>
</dbReference>
<dbReference type="PROSITE" id="PS00830">
    <property type="entry name" value="GREAB_2"/>
    <property type="match status" value="1"/>
</dbReference>
<evidence type="ECO:0000255" key="1">
    <source>
        <dbReference type="HAMAP-Rule" id="MF_00105"/>
    </source>
</evidence>
<gene>
    <name evidence="1" type="primary">greA</name>
    <name type="ordered locus">CLI_3728</name>
</gene>
<organism>
    <name type="scientific">Clostridium botulinum (strain Langeland / NCTC 10281 / Type F)</name>
    <dbReference type="NCBI Taxonomy" id="441772"/>
    <lineage>
        <taxon>Bacteria</taxon>
        <taxon>Bacillati</taxon>
        <taxon>Bacillota</taxon>
        <taxon>Clostridia</taxon>
        <taxon>Eubacteriales</taxon>
        <taxon>Clostridiaceae</taxon>
        <taxon>Clostridium</taxon>
    </lineage>
</organism>
<feature type="chain" id="PRO_1000094164" description="Transcription elongation factor GreA">
    <location>
        <begin position="1"/>
        <end position="160"/>
    </location>
</feature>
<feature type="coiled-coil region" evidence="1">
    <location>
        <begin position="14"/>
        <end position="76"/>
    </location>
</feature>
<reference key="1">
    <citation type="submission" date="2007-06" db="EMBL/GenBank/DDBJ databases">
        <authorList>
            <person name="Brinkac L.M."/>
            <person name="Daugherty S."/>
            <person name="Dodson R.J."/>
            <person name="Madupu R."/>
            <person name="Brown J.L."/>
            <person name="Bruce D."/>
            <person name="Detter C."/>
            <person name="Munk C."/>
            <person name="Smith L.A."/>
            <person name="Smith T.J."/>
            <person name="White O."/>
            <person name="Brettin T.S."/>
        </authorList>
    </citation>
    <scope>NUCLEOTIDE SEQUENCE [LARGE SCALE GENOMIC DNA]</scope>
    <source>
        <strain>Langeland / NCTC 10281 / Type F</strain>
    </source>
</reference>
<proteinExistence type="inferred from homology"/>
<accession>A7GJB4</accession>
<keyword id="KW-0175">Coiled coil</keyword>
<keyword id="KW-0238">DNA-binding</keyword>
<keyword id="KW-0804">Transcription</keyword>
<keyword id="KW-0805">Transcription regulation</keyword>
<name>GREA_CLOBL</name>